<feature type="chain" id="PRO_0000197488" description="Glutathione synthetase">
    <location>
        <begin position="1"/>
        <end position="323"/>
    </location>
</feature>
<feature type="domain" description="ATP-grasp" evidence="2">
    <location>
        <begin position="133"/>
        <end position="317"/>
    </location>
</feature>
<feature type="binding site" evidence="2">
    <location>
        <begin position="159"/>
        <end position="215"/>
    </location>
    <ligand>
        <name>ATP</name>
        <dbReference type="ChEBI" id="CHEBI:30616"/>
    </ligand>
</feature>
<feature type="binding site" evidence="2">
    <location>
        <position position="288"/>
    </location>
    <ligand>
        <name>Mg(2+)</name>
        <dbReference type="ChEBI" id="CHEBI:18420"/>
    </ligand>
</feature>
<feature type="binding site" evidence="2">
    <location>
        <position position="290"/>
    </location>
    <ligand>
        <name>Mg(2+)</name>
        <dbReference type="ChEBI" id="CHEBI:18420"/>
    </ligand>
</feature>
<proteinExistence type="inferred from homology"/>
<dbReference type="EC" id="6.3.2.3" evidence="2"/>
<dbReference type="EMBL" id="D88540">
    <property type="protein sequence ID" value="BAA22859.1"/>
    <property type="molecule type" value="Genomic_DNA"/>
</dbReference>
<dbReference type="EMBL" id="CP000100">
    <property type="protein sequence ID" value="ABB58354.1"/>
    <property type="molecule type" value="Genomic_DNA"/>
</dbReference>
<dbReference type="RefSeq" id="WP_011244088.1">
    <property type="nucleotide sequence ID" value="NZ_JACJTX010000001.1"/>
</dbReference>
<dbReference type="SMR" id="O32463"/>
<dbReference type="STRING" id="1140.Synpcc7942_2324"/>
<dbReference type="PaxDb" id="1140-Synpcc7942_2324"/>
<dbReference type="GeneID" id="72431211"/>
<dbReference type="KEGG" id="syf:Synpcc7942_2324"/>
<dbReference type="eggNOG" id="COG0189">
    <property type="taxonomic scope" value="Bacteria"/>
</dbReference>
<dbReference type="HOGENOM" id="CLU_068239_0_0_3"/>
<dbReference type="OrthoDB" id="9785415at2"/>
<dbReference type="BioCyc" id="SYNEL:SYNPCC7942_2324-MONOMER"/>
<dbReference type="UniPathway" id="UPA00142">
    <property type="reaction ID" value="UER00210"/>
</dbReference>
<dbReference type="Proteomes" id="UP000889800">
    <property type="component" value="Chromosome"/>
</dbReference>
<dbReference type="GO" id="GO:0005737">
    <property type="term" value="C:cytoplasm"/>
    <property type="evidence" value="ECO:0007669"/>
    <property type="project" value="TreeGrafter"/>
</dbReference>
<dbReference type="GO" id="GO:0005524">
    <property type="term" value="F:ATP binding"/>
    <property type="evidence" value="ECO:0007669"/>
    <property type="project" value="UniProtKB-UniRule"/>
</dbReference>
<dbReference type="GO" id="GO:0004363">
    <property type="term" value="F:glutathione synthase activity"/>
    <property type="evidence" value="ECO:0007669"/>
    <property type="project" value="UniProtKB-UniRule"/>
</dbReference>
<dbReference type="GO" id="GO:0046872">
    <property type="term" value="F:metal ion binding"/>
    <property type="evidence" value="ECO:0007669"/>
    <property type="project" value="UniProtKB-KW"/>
</dbReference>
<dbReference type="Gene3D" id="3.40.50.20">
    <property type="match status" value="1"/>
</dbReference>
<dbReference type="Gene3D" id="3.30.1490.20">
    <property type="entry name" value="ATP-grasp fold, A domain"/>
    <property type="match status" value="1"/>
</dbReference>
<dbReference type="Gene3D" id="3.30.470.20">
    <property type="entry name" value="ATP-grasp fold, B domain"/>
    <property type="match status" value="1"/>
</dbReference>
<dbReference type="HAMAP" id="MF_00162">
    <property type="entry name" value="GSH_S"/>
    <property type="match status" value="1"/>
</dbReference>
<dbReference type="InterPro" id="IPR011761">
    <property type="entry name" value="ATP-grasp"/>
</dbReference>
<dbReference type="InterPro" id="IPR013815">
    <property type="entry name" value="ATP_grasp_subdomain_1"/>
</dbReference>
<dbReference type="InterPro" id="IPR006284">
    <property type="entry name" value="Glut_synth_pro"/>
</dbReference>
<dbReference type="InterPro" id="IPR004218">
    <property type="entry name" value="GSHS_ATP-bd"/>
</dbReference>
<dbReference type="InterPro" id="IPR004215">
    <property type="entry name" value="GSHS_N"/>
</dbReference>
<dbReference type="InterPro" id="IPR016185">
    <property type="entry name" value="PreATP-grasp_dom_sf"/>
</dbReference>
<dbReference type="NCBIfam" id="TIGR01380">
    <property type="entry name" value="glut_syn"/>
    <property type="match status" value="1"/>
</dbReference>
<dbReference type="NCBIfam" id="NF003573">
    <property type="entry name" value="PRK05246.1"/>
    <property type="match status" value="1"/>
</dbReference>
<dbReference type="PANTHER" id="PTHR21621:SF4">
    <property type="entry name" value="GLUTATHIONE SYNTHETASE"/>
    <property type="match status" value="1"/>
</dbReference>
<dbReference type="PANTHER" id="PTHR21621">
    <property type="entry name" value="RIBOSOMAL PROTEIN S6 MODIFICATION PROTEIN"/>
    <property type="match status" value="1"/>
</dbReference>
<dbReference type="Pfam" id="PF02955">
    <property type="entry name" value="GSH-S_ATP"/>
    <property type="match status" value="1"/>
</dbReference>
<dbReference type="Pfam" id="PF02951">
    <property type="entry name" value="GSH-S_N"/>
    <property type="match status" value="1"/>
</dbReference>
<dbReference type="SUPFAM" id="SSF56059">
    <property type="entry name" value="Glutathione synthetase ATP-binding domain-like"/>
    <property type="match status" value="1"/>
</dbReference>
<dbReference type="SUPFAM" id="SSF52440">
    <property type="entry name" value="PreATP-grasp domain"/>
    <property type="match status" value="1"/>
</dbReference>
<dbReference type="PROSITE" id="PS50975">
    <property type="entry name" value="ATP_GRASP"/>
    <property type="match status" value="1"/>
</dbReference>
<evidence type="ECO:0000250" key="1"/>
<evidence type="ECO:0000255" key="2">
    <source>
        <dbReference type="HAMAP-Rule" id="MF_00162"/>
    </source>
</evidence>
<keyword id="KW-0067">ATP-binding</keyword>
<keyword id="KW-0317">Glutathione biosynthesis</keyword>
<keyword id="KW-0436">Ligase</keyword>
<keyword id="KW-0460">Magnesium</keyword>
<keyword id="KW-0464">Manganese</keyword>
<keyword id="KW-0479">Metal-binding</keyword>
<keyword id="KW-0547">Nucleotide-binding</keyword>
<keyword id="KW-1185">Reference proteome</keyword>
<organism>
    <name type="scientific">Synechococcus elongatus (strain ATCC 33912 / PCC 7942 / FACHB-805)</name>
    <name type="common">Anacystis nidulans R2</name>
    <dbReference type="NCBI Taxonomy" id="1140"/>
    <lineage>
        <taxon>Bacteria</taxon>
        <taxon>Bacillati</taxon>
        <taxon>Cyanobacteriota</taxon>
        <taxon>Cyanophyceae</taxon>
        <taxon>Synechococcales</taxon>
        <taxon>Synechococcaceae</taxon>
        <taxon>Synechococcus</taxon>
    </lineage>
</organism>
<comment type="catalytic activity">
    <reaction evidence="2">
        <text>gamma-L-glutamyl-L-cysteine + glycine + ATP = glutathione + ADP + phosphate + H(+)</text>
        <dbReference type="Rhea" id="RHEA:13557"/>
        <dbReference type="ChEBI" id="CHEBI:15378"/>
        <dbReference type="ChEBI" id="CHEBI:30616"/>
        <dbReference type="ChEBI" id="CHEBI:43474"/>
        <dbReference type="ChEBI" id="CHEBI:57305"/>
        <dbReference type="ChEBI" id="CHEBI:57925"/>
        <dbReference type="ChEBI" id="CHEBI:58173"/>
        <dbReference type="ChEBI" id="CHEBI:456216"/>
        <dbReference type="EC" id="6.3.2.3"/>
    </reaction>
</comment>
<comment type="cofactor">
    <cofactor evidence="1">
        <name>Mg(2+)</name>
        <dbReference type="ChEBI" id="CHEBI:18420"/>
    </cofactor>
    <cofactor evidence="1">
        <name>Mn(2+)</name>
        <dbReference type="ChEBI" id="CHEBI:29035"/>
    </cofactor>
    <text evidence="1">Binds 1 Mg(2+) or Mn(2+) ion per subunit.</text>
</comment>
<comment type="pathway">
    <text evidence="2">Sulfur metabolism; glutathione biosynthesis; glutathione from L-cysteine and L-glutamate: step 2/2.</text>
</comment>
<comment type="similarity">
    <text evidence="2">Belongs to the prokaryotic GSH synthase family.</text>
</comment>
<protein>
    <recommendedName>
        <fullName evidence="2">Glutathione synthetase</fullName>
        <ecNumber evidence="2">6.3.2.3</ecNumber>
    </recommendedName>
    <alternativeName>
        <fullName evidence="2">GSH synthetase</fullName>
        <shortName evidence="2">GSH-S</shortName>
        <shortName evidence="2">GSHase</shortName>
    </alternativeName>
    <alternativeName>
        <fullName evidence="2">Glutathione synthase</fullName>
    </alternativeName>
</protein>
<gene>
    <name evidence="2" type="primary">gshB</name>
    <name type="synonym">gshII</name>
    <name type="ordered locus">Synpcc7942_2324</name>
</gene>
<reference key="1">
    <citation type="journal article" date="1997" name="Microbiology">
        <title>The gshB gene in the cyanobacterium Synechococcus sp. PCC 7942 encodes a functional glutathione synthetase.</title>
        <authorList>
            <person name="Okumura N."/>
            <person name="Masamoto K."/>
            <person name="Wada H."/>
        </authorList>
    </citation>
    <scope>NUCLEOTIDE SEQUENCE [GENOMIC DNA]</scope>
</reference>
<reference key="2">
    <citation type="submission" date="2005-08" db="EMBL/GenBank/DDBJ databases">
        <title>Complete sequence of chromosome 1 of Synechococcus elongatus PCC 7942.</title>
        <authorList>
            <consortium name="US DOE Joint Genome Institute"/>
            <person name="Copeland A."/>
            <person name="Lucas S."/>
            <person name="Lapidus A."/>
            <person name="Barry K."/>
            <person name="Detter J.C."/>
            <person name="Glavina T."/>
            <person name="Hammon N."/>
            <person name="Israni S."/>
            <person name="Pitluck S."/>
            <person name="Schmutz J."/>
            <person name="Larimer F."/>
            <person name="Land M."/>
            <person name="Kyrpides N."/>
            <person name="Lykidis A."/>
            <person name="Golden S."/>
            <person name="Richardson P."/>
        </authorList>
    </citation>
    <scope>NUCLEOTIDE SEQUENCE [LARGE SCALE GENOMIC DNA]</scope>
    <source>
        <strain>ATCC 33912 / PCC 7942 / FACHB-805</strain>
    </source>
</reference>
<sequence>MKLAFLIDPIAALDPTHDSTVALMEAAQLRGHEIWIGEISDLSVHVGEPLGLLRPLKIEPVQWLGDRWQVANPWFTAGEAKRRSLHDFAAVFMRKDPPVTTAYLYATYLLDLVDPKKTRVVNSPEGLRHANEKMYALQFQSVVPRTLVSSNKAEIRAFLDELRAAVLKPLGGKAGEGILFLDPGDRNFNSLVEISTQQGQLPVMVQQYLPEAKDGDKRIILVNGEPLGAVNRVPTGREFRGNMAVGGRVEAVPITDRDREICAAVAPRLRQDGLFFVGIDVIGGYLTEVNVTSPTGIREIDRLNGVSIGDQTIAALEALVNQG</sequence>
<name>GSHB_SYNE7</name>
<accession>O32463</accession>
<accession>Q31KR5</accession>